<feature type="peptide" id="PRO_0000044236" description="Pigment-dispersing hormone">
    <location>
        <begin position="1"/>
        <end position="18"/>
    </location>
</feature>
<feature type="region of interest" description="Important for DRPH activity">
    <location>
        <begin position="6"/>
        <end position="9"/>
    </location>
</feature>
<feature type="modified residue" description="Alanine amide" evidence="1 2">
    <location>
        <position position="18"/>
    </location>
</feature>
<dbReference type="PIR" id="A25144">
    <property type="entry name" value="DRUFPD"/>
</dbReference>
<dbReference type="GO" id="GO:0005576">
    <property type="term" value="C:extracellular region"/>
    <property type="evidence" value="ECO:0007669"/>
    <property type="project" value="UniProtKB-SubCell"/>
</dbReference>
<dbReference type="GO" id="GO:0045202">
    <property type="term" value="C:synapse"/>
    <property type="evidence" value="ECO:0007669"/>
    <property type="project" value="GOC"/>
</dbReference>
<dbReference type="GO" id="GO:0005179">
    <property type="term" value="F:hormone activity"/>
    <property type="evidence" value="ECO:0007669"/>
    <property type="project" value="UniProtKB-KW"/>
</dbReference>
<dbReference type="GO" id="GO:0007268">
    <property type="term" value="P:chemical synaptic transmission"/>
    <property type="evidence" value="ECO:0007669"/>
    <property type="project" value="UniProtKB-KW"/>
</dbReference>
<dbReference type="GO" id="GO:0009416">
    <property type="term" value="P:response to light stimulus"/>
    <property type="evidence" value="ECO:0007669"/>
    <property type="project" value="InterPro"/>
</dbReference>
<dbReference type="InterPro" id="IPR009396">
    <property type="entry name" value="Pigment_DH"/>
</dbReference>
<dbReference type="Pfam" id="PF06324">
    <property type="entry name" value="Pigment_DH"/>
    <property type="match status" value="1"/>
</dbReference>
<protein>
    <recommendedName>
        <fullName>Pigment-dispersing hormone</fullName>
        <shortName>PDH</shortName>
    </recommendedName>
    <alternativeName>
        <fullName>Beta-PDH</fullName>
    </alternativeName>
    <alternativeName>
        <fullName>Light-adapting distal retinal pigment hormone</fullName>
        <shortName>DRPH</shortName>
    </alternativeName>
</protein>
<proteinExistence type="evidence at protein level"/>
<sequence length="18" mass="1928">NSELINSILGLPKVMNDA</sequence>
<reference key="1">
    <citation type="journal article" date="1985" name="Proc. Natl. Acad. Sci. U.S.A.">
        <title>Characterization of a pigment-dispersing hormone in eyestalks of the fiddler crab Uca pugilator.</title>
        <authorList>
            <person name="Rao K.R."/>
            <person name="Riehm J.P."/>
            <person name="Zahnow C.A."/>
            <person name="Kleinholz L.H."/>
            <person name="Tarr G.E."/>
            <person name="Johnson L."/>
            <person name="Norton S."/>
            <person name="Landau M."/>
            <person name="Semmes O.J."/>
            <person name="Sattelberg R.M."/>
            <person name="Jorenby W.H."/>
            <person name="Hintz M.F."/>
        </authorList>
    </citation>
    <scope>PROTEIN SEQUENCE</scope>
    <scope>AMIDATION AT ALA-18</scope>
    <source>
        <tissue>Eyestalk</tissue>
    </source>
</reference>
<reference key="2">
    <citation type="journal article" date="1993" name="Comp. Biochem. Physiol.">
        <title>Quantification, immunoaffinity purification and sequence analysis of a pigment-dispersing hormone of the shore crab, Carcinus maenas (L.).</title>
        <authorList>
            <person name="Loehr J."/>
            <person name="Klein J."/>
            <person name="Webster S.G."/>
            <person name="Dircksen H."/>
        </authorList>
    </citation>
    <scope>PROTEIN SEQUENCE</scope>
    <scope>IDENTIFICATION BY MASS SPECTROMETRY</scope>
    <scope>AMIDATION AT ALA-18</scope>
</reference>
<name>PDH_LEPPG</name>
<comment type="function">
    <text>Causes the migration of the distal retinal pigment into the proximal end of the pigment chromatophore cells and thus decreases the amount of light entering the retinulas. May also function as a neurotransmitter and/or neuromodulator.</text>
</comment>
<comment type="subcellular location">
    <subcellularLocation>
        <location>Secreted</location>
    </subcellularLocation>
</comment>
<comment type="similarity">
    <text evidence="3">Belongs to the arthropod PDH family.</text>
</comment>
<accession>P08871</accession>
<organism>
    <name type="scientific">Leptuca pugilator</name>
    <name type="common">Atlantic sand fiddler crab</name>
    <name type="synonym">Uca pugilator</name>
    <dbReference type="NCBI Taxonomy" id="6772"/>
    <lineage>
        <taxon>Eukaryota</taxon>
        <taxon>Metazoa</taxon>
        <taxon>Ecdysozoa</taxon>
        <taxon>Arthropoda</taxon>
        <taxon>Crustacea</taxon>
        <taxon>Multicrustacea</taxon>
        <taxon>Malacostraca</taxon>
        <taxon>Eumalacostraca</taxon>
        <taxon>Eucarida</taxon>
        <taxon>Decapoda</taxon>
        <taxon>Pleocyemata</taxon>
        <taxon>Brachyura</taxon>
        <taxon>Eubrachyura</taxon>
        <taxon>Ocypodoidea</taxon>
        <taxon>Ocypodidae</taxon>
        <taxon>Gelasiminae</taxon>
        <taxon>Leptuca</taxon>
    </lineage>
</organism>
<evidence type="ECO:0000269" key="1">
    <source>
    </source>
</evidence>
<evidence type="ECO:0000269" key="2">
    <source>
    </source>
</evidence>
<evidence type="ECO:0000305" key="3"/>
<keyword id="KW-0027">Amidation</keyword>
<keyword id="KW-0903">Direct protein sequencing</keyword>
<keyword id="KW-0372">Hormone</keyword>
<keyword id="KW-0529">Neurotransmitter</keyword>
<keyword id="KW-0964">Secreted</keyword>